<comment type="catalytic activity">
    <reaction evidence="1">
        <text>N(2)-acetyl-L-ornithine + 2-oxoglutarate = N-acetyl-L-glutamate 5-semialdehyde + L-glutamate</text>
        <dbReference type="Rhea" id="RHEA:18049"/>
        <dbReference type="ChEBI" id="CHEBI:16810"/>
        <dbReference type="ChEBI" id="CHEBI:29123"/>
        <dbReference type="ChEBI" id="CHEBI:29985"/>
        <dbReference type="ChEBI" id="CHEBI:57805"/>
        <dbReference type="EC" id="2.6.1.11"/>
    </reaction>
</comment>
<comment type="cofactor">
    <cofactor evidence="1">
        <name>pyridoxal 5'-phosphate</name>
        <dbReference type="ChEBI" id="CHEBI:597326"/>
    </cofactor>
    <text evidence="1">Binds 1 pyridoxal phosphate per subunit.</text>
</comment>
<comment type="pathway">
    <text evidence="1">Amino-acid biosynthesis; L-arginine biosynthesis; N(2)-acetyl-L-ornithine from L-glutamate: step 4/4.</text>
</comment>
<comment type="subunit">
    <text evidence="1">Homodimer.</text>
</comment>
<comment type="subcellular location">
    <subcellularLocation>
        <location evidence="1">Cytoplasm</location>
    </subcellularLocation>
</comment>
<comment type="miscellaneous">
    <text evidence="1">May also have succinyldiaminopimelate aminotransferase activity, thus carrying out the corresponding step in lysine biosynthesis.</text>
</comment>
<comment type="similarity">
    <text evidence="1">Belongs to the class-III pyridoxal-phosphate-dependent aminotransferase family. ArgD subfamily.</text>
</comment>
<keyword id="KW-0028">Amino-acid biosynthesis</keyword>
<keyword id="KW-0032">Aminotransferase</keyword>
<keyword id="KW-0055">Arginine biosynthesis</keyword>
<keyword id="KW-0963">Cytoplasm</keyword>
<keyword id="KW-0663">Pyridoxal phosphate</keyword>
<keyword id="KW-1185">Reference proteome</keyword>
<keyword id="KW-0808">Transferase</keyword>
<name>ARGD_MYCLE</name>
<evidence type="ECO:0000255" key="1">
    <source>
        <dbReference type="HAMAP-Rule" id="MF_01107"/>
    </source>
</evidence>
<proteinExistence type="inferred from homology"/>
<organism>
    <name type="scientific">Mycobacterium leprae (strain TN)</name>
    <dbReference type="NCBI Taxonomy" id="272631"/>
    <lineage>
        <taxon>Bacteria</taxon>
        <taxon>Bacillati</taxon>
        <taxon>Actinomycetota</taxon>
        <taxon>Actinomycetes</taxon>
        <taxon>Mycobacteriales</taxon>
        <taxon>Mycobacteriaceae</taxon>
        <taxon>Mycobacterium</taxon>
    </lineage>
</organism>
<protein>
    <recommendedName>
        <fullName evidence="1">Acetylornithine aminotransferase</fullName>
        <shortName evidence="1">ACOAT</shortName>
        <ecNumber evidence="1">2.6.1.11</ecNumber>
    </recommendedName>
</protein>
<reference key="1">
    <citation type="journal article" date="2001" name="Nature">
        <title>Massive gene decay in the leprosy bacillus.</title>
        <authorList>
            <person name="Cole S.T."/>
            <person name="Eiglmeier K."/>
            <person name="Parkhill J."/>
            <person name="James K.D."/>
            <person name="Thomson N.R."/>
            <person name="Wheeler P.R."/>
            <person name="Honore N."/>
            <person name="Garnier T."/>
            <person name="Churcher C.M."/>
            <person name="Harris D.E."/>
            <person name="Mungall K.L."/>
            <person name="Basham D."/>
            <person name="Brown D."/>
            <person name="Chillingworth T."/>
            <person name="Connor R."/>
            <person name="Davies R.M."/>
            <person name="Devlin K."/>
            <person name="Duthoy S."/>
            <person name="Feltwell T."/>
            <person name="Fraser A."/>
            <person name="Hamlin N."/>
            <person name="Holroyd S."/>
            <person name="Hornsby T."/>
            <person name="Jagels K."/>
            <person name="Lacroix C."/>
            <person name="Maclean J."/>
            <person name="Moule S."/>
            <person name="Murphy L.D."/>
            <person name="Oliver K."/>
            <person name="Quail M.A."/>
            <person name="Rajandream M.A."/>
            <person name="Rutherford K.M."/>
            <person name="Rutter S."/>
            <person name="Seeger K."/>
            <person name="Simon S."/>
            <person name="Simmonds M."/>
            <person name="Skelton J."/>
            <person name="Squares R."/>
            <person name="Squares S."/>
            <person name="Stevens K."/>
            <person name="Taylor K."/>
            <person name="Whitehead S."/>
            <person name="Woodward J.R."/>
            <person name="Barrell B.G."/>
        </authorList>
    </citation>
    <scope>NUCLEOTIDE SEQUENCE [LARGE SCALE GENOMIC DNA]</scope>
    <source>
        <strain>TN</strain>
    </source>
</reference>
<sequence>MTPTQTNTATMQQRWETVMMNNYGTPPIVLASGNGAVVTDVDSNTYLDLLGGIAVNVLGHRHPAVIEAVTHQITTLGHTSNLYATEPSITLAEELVALLGADTQTRVFFCNSGTEANELAFKLSRLTGRTKLVAAQAAFHGRTMGSLALTGQPAKQAAFEPLPGHVTHVPYGQVDALAAAVDNDTAAVFLEPIMGESGVIVPPEGYLAAARDITTRHGALLVIDEVQTGIGRTGAFFAHQHDSITPDVVTLAKGLGGGLPIGAFLATGPAAELLTLGLHGSTFGGNPVCTAAALAVLRVLATQGLVRRAEVLGDSMRIGIESLSHPLIDQVRGRGLLLGIVLTAPRAKDIEKAARDAGFLVNATAPEVIRLAPPLIITESQIDSFITALPGILDASIAELGKKA</sequence>
<accession>Q9CC12</accession>
<dbReference type="EC" id="2.6.1.11" evidence="1"/>
<dbReference type="EMBL" id="AL583922">
    <property type="protein sequence ID" value="CAC30360.1"/>
    <property type="molecule type" value="Genomic_DNA"/>
</dbReference>
<dbReference type="PIR" id="C87085">
    <property type="entry name" value="C87085"/>
</dbReference>
<dbReference type="RefSeq" id="NP_302002.1">
    <property type="nucleotide sequence ID" value="NC_002677.1"/>
</dbReference>
<dbReference type="RefSeq" id="WP_010908323.1">
    <property type="nucleotide sequence ID" value="NC_002677.1"/>
</dbReference>
<dbReference type="SMR" id="Q9CC12"/>
<dbReference type="STRING" id="272631.gene:17575248"/>
<dbReference type="KEGG" id="mle:ML1409"/>
<dbReference type="PATRIC" id="fig|272631.5.peg.2614"/>
<dbReference type="Leproma" id="ML1409"/>
<dbReference type="eggNOG" id="COG4992">
    <property type="taxonomic scope" value="Bacteria"/>
</dbReference>
<dbReference type="HOGENOM" id="CLU_016922_10_1_11"/>
<dbReference type="OrthoDB" id="9801052at2"/>
<dbReference type="UniPathway" id="UPA00068">
    <property type="reaction ID" value="UER00109"/>
</dbReference>
<dbReference type="Proteomes" id="UP000000806">
    <property type="component" value="Chromosome"/>
</dbReference>
<dbReference type="GO" id="GO:0005737">
    <property type="term" value="C:cytoplasm"/>
    <property type="evidence" value="ECO:0007669"/>
    <property type="project" value="UniProtKB-SubCell"/>
</dbReference>
<dbReference type="GO" id="GO:0042802">
    <property type="term" value="F:identical protein binding"/>
    <property type="evidence" value="ECO:0007669"/>
    <property type="project" value="TreeGrafter"/>
</dbReference>
<dbReference type="GO" id="GO:0003992">
    <property type="term" value="F:N2-acetyl-L-ornithine:2-oxoglutarate 5-aminotransferase activity"/>
    <property type="evidence" value="ECO:0007669"/>
    <property type="project" value="UniProtKB-UniRule"/>
</dbReference>
<dbReference type="GO" id="GO:0030170">
    <property type="term" value="F:pyridoxal phosphate binding"/>
    <property type="evidence" value="ECO:0007669"/>
    <property type="project" value="InterPro"/>
</dbReference>
<dbReference type="GO" id="GO:0006526">
    <property type="term" value="P:L-arginine biosynthetic process"/>
    <property type="evidence" value="ECO:0007669"/>
    <property type="project" value="UniProtKB-UniRule"/>
</dbReference>
<dbReference type="CDD" id="cd00610">
    <property type="entry name" value="OAT_like"/>
    <property type="match status" value="1"/>
</dbReference>
<dbReference type="FunFam" id="3.40.640.10:FF:000004">
    <property type="entry name" value="Acetylornithine aminotransferase"/>
    <property type="match status" value="1"/>
</dbReference>
<dbReference type="Gene3D" id="3.90.1150.10">
    <property type="entry name" value="Aspartate Aminotransferase, domain 1"/>
    <property type="match status" value="1"/>
</dbReference>
<dbReference type="Gene3D" id="3.40.640.10">
    <property type="entry name" value="Type I PLP-dependent aspartate aminotransferase-like (Major domain)"/>
    <property type="match status" value="1"/>
</dbReference>
<dbReference type="HAMAP" id="MF_01107">
    <property type="entry name" value="ArgD_aminotrans_3"/>
    <property type="match status" value="1"/>
</dbReference>
<dbReference type="InterPro" id="IPR004636">
    <property type="entry name" value="AcOrn/SuccOrn_fam"/>
</dbReference>
<dbReference type="InterPro" id="IPR005814">
    <property type="entry name" value="Aminotrans_3"/>
</dbReference>
<dbReference type="InterPro" id="IPR049704">
    <property type="entry name" value="Aminotrans_3_PPA_site"/>
</dbReference>
<dbReference type="InterPro" id="IPR050103">
    <property type="entry name" value="Class-III_PLP-dep_AT"/>
</dbReference>
<dbReference type="InterPro" id="IPR015424">
    <property type="entry name" value="PyrdxlP-dep_Trfase"/>
</dbReference>
<dbReference type="InterPro" id="IPR015421">
    <property type="entry name" value="PyrdxlP-dep_Trfase_major"/>
</dbReference>
<dbReference type="InterPro" id="IPR015422">
    <property type="entry name" value="PyrdxlP-dep_Trfase_small"/>
</dbReference>
<dbReference type="NCBIfam" id="TIGR00707">
    <property type="entry name" value="argD"/>
    <property type="match status" value="1"/>
</dbReference>
<dbReference type="NCBIfam" id="NF002874">
    <property type="entry name" value="PRK03244.1"/>
    <property type="match status" value="1"/>
</dbReference>
<dbReference type="PANTHER" id="PTHR11986:SF79">
    <property type="entry name" value="ACETYLORNITHINE AMINOTRANSFERASE, MITOCHONDRIAL"/>
    <property type="match status" value="1"/>
</dbReference>
<dbReference type="PANTHER" id="PTHR11986">
    <property type="entry name" value="AMINOTRANSFERASE CLASS III"/>
    <property type="match status" value="1"/>
</dbReference>
<dbReference type="Pfam" id="PF00202">
    <property type="entry name" value="Aminotran_3"/>
    <property type="match status" value="1"/>
</dbReference>
<dbReference type="PIRSF" id="PIRSF000521">
    <property type="entry name" value="Transaminase_4ab_Lys_Orn"/>
    <property type="match status" value="1"/>
</dbReference>
<dbReference type="SUPFAM" id="SSF53383">
    <property type="entry name" value="PLP-dependent transferases"/>
    <property type="match status" value="1"/>
</dbReference>
<dbReference type="PROSITE" id="PS00600">
    <property type="entry name" value="AA_TRANSFER_CLASS_3"/>
    <property type="match status" value="1"/>
</dbReference>
<gene>
    <name evidence="1" type="primary">argD</name>
    <name type="ordered locus">ML1409</name>
</gene>
<feature type="chain" id="PRO_0000112755" description="Acetylornithine aminotransferase">
    <location>
        <begin position="1"/>
        <end position="404"/>
    </location>
</feature>
<feature type="binding site" evidence="1">
    <location>
        <begin position="113"/>
        <end position="114"/>
    </location>
    <ligand>
        <name>pyridoxal 5'-phosphate</name>
        <dbReference type="ChEBI" id="CHEBI:597326"/>
    </ligand>
</feature>
<feature type="binding site" evidence="1">
    <location>
        <position position="139"/>
    </location>
    <ligand>
        <name>pyridoxal 5'-phosphate</name>
        <dbReference type="ChEBI" id="CHEBI:597326"/>
    </ligand>
</feature>
<feature type="binding site" evidence="1">
    <location>
        <position position="142"/>
    </location>
    <ligand>
        <name>N(2)-acetyl-L-ornithine</name>
        <dbReference type="ChEBI" id="CHEBI:57805"/>
    </ligand>
</feature>
<feature type="binding site" evidence="1">
    <location>
        <begin position="224"/>
        <end position="227"/>
    </location>
    <ligand>
        <name>pyridoxal 5'-phosphate</name>
        <dbReference type="ChEBI" id="CHEBI:597326"/>
    </ligand>
</feature>
<feature type="binding site" evidence="1">
    <location>
        <position position="281"/>
    </location>
    <ligand>
        <name>N(2)-acetyl-L-ornithine</name>
        <dbReference type="ChEBI" id="CHEBI:57805"/>
    </ligand>
</feature>
<feature type="binding site" evidence="1">
    <location>
        <position position="282"/>
    </location>
    <ligand>
        <name>pyridoxal 5'-phosphate</name>
        <dbReference type="ChEBI" id="CHEBI:597326"/>
    </ligand>
</feature>
<feature type="modified residue" description="N6-(pyridoxal phosphate)lysine" evidence="1">
    <location>
        <position position="253"/>
    </location>
</feature>